<reference key="1">
    <citation type="journal article" date="2011" name="PLoS Genet.">
        <title>The evolution of host specialization in the vertebrate gut symbiont Lactobacillus reuteri.</title>
        <authorList>
            <person name="Frese S.A."/>
            <person name="Benson A.K."/>
            <person name="Tannock G.W."/>
            <person name="Loach D.M."/>
            <person name="Kim J."/>
            <person name="Zhang M."/>
            <person name="Oh P.L."/>
            <person name="Heng N.C."/>
            <person name="Patil P.B."/>
            <person name="Juge N."/>
            <person name="Mackenzie D.A."/>
            <person name="Pearson B.M."/>
            <person name="Lapidus A."/>
            <person name="Dalin E."/>
            <person name="Tice H."/>
            <person name="Goltsman E."/>
            <person name="Land M."/>
            <person name="Hauser L."/>
            <person name="Ivanova N."/>
            <person name="Kyrpides N.C."/>
            <person name="Walter J."/>
        </authorList>
    </citation>
    <scope>NUCLEOTIDE SEQUENCE [LARGE SCALE GENOMIC DNA]</scope>
    <source>
        <strain>DSM 20016</strain>
    </source>
</reference>
<organism>
    <name type="scientific">Limosilactobacillus reuteri (strain DSM 20016)</name>
    <name type="common">Lactobacillus reuteri</name>
    <dbReference type="NCBI Taxonomy" id="557436"/>
    <lineage>
        <taxon>Bacteria</taxon>
        <taxon>Bacillati</taxon>
        <taxon>Bacillota</taxon>
        <taxon>Bacilli</taxon>
        <taxon>Lactobacillales</taxon>
        <taxon>Lactobacillaceae</taxon>
        <taxon>Limosilactobacillus</taxon>
    </lineage>
</organism>
<accession>A5VJ92</accession>
<name>EFTU_LIMRD</name>
<protein>
    <recommendedName>
        <fullName evidence="2">Elongation factor Tu</fullName>
        <shortName evidence="2">EF-Tu</shortName>
        <ecNumber evidence="2">3.6.5.3</ecNumber>
    </recommendedName>
</protein>
<proteinExistence type="inferred from homology"/>
<sequence length="396" mass="43432">MAEKEHYERTKPHVNIGTIGHVDHGKTTLTAAITKVLAAKGLAKAEDYADIDAAPEEKERGITINTAHVEYETEKRHYAHIDAPGHADYVKNMITGAAQMDGAILVVAATDGPMPQTREHILLARQVGVQYIVVFLNKTDLVDDDELVDLVEMEVRDLLSEYDFPGDDVPVVRGSALKALEGDPEQEKVILHLMDVIDDYIPTPKRPTDKPFMMPVEDVFTITGRGTVASGRIDRGTVKVGDEVEIVGLTEDVLKSTVTGLEMFHKTLDLGEAGDNVGVLLRGISHDQIQRGQVLAEPGSIQTHKNFKGEVYVMTKEEGGRHTPFFSNYRPQFYFHTTDVTGTIELPDGVEMVMPGDNVTFTVNLQKPVALEKGLKFTIREGGHTVGAGVVSDILD</sequence>
<dbReference type="EC" id="3.6.5.3" evidence="2"/>
<dbReference type="EMBL" id="CP000705">
    <property type="protein sequence ID" value="ABQ82916.1"/>
    <property type="molecule type" value="Genomic_DNA"/>
</dbReference>
<dbReference type="RefSeq" id="WP_003666836.1">
    <property type="nucleotide sequence ID" value="NZ_AZDD01000002.1"/>
</dbReference>
<dbReference type="SMR" id="A5VJ92"/>
<dbReference type="STRING" id="557436.Lreu_0651"/>
<dbReference type="GeneID" id="77190802"/>
<dbReference type="KEGG" id="lre:Lreu_0651"/>
<dbReference type="PATRIC" id="fig|557436.17.peg.723"/>
<dbReference type="eggNOG" id="COG0050">
    <property type="taxonomic scope" value="Bacteria"/>
</dbReference>
<dbReference type="HOGENOM" id="CLU_007265_0_1_9"/>
<dbReference type="Proteomes" id="UP000001991">
    <property type="component" value="Chromosome"/>
</dbReference>
<dbReference type="GO" id="GO:0005829">
    <property type="term" value="C:cytosol"/>
    <property type="evidence" value="ECO:0007669"/>
    <property type="project" value="TreeGrafter"/>
</dbReference>
<dbReference type="GO" id="GO:0005525">
    <property type="term" value="F:GTP binding"/>
    <property type="evidence" value="ECO:0007669"/>
    <property type="project" value="UniProtKB-UniRule"/>
</dbReference>
<dbReference type="GO" id="GO:0003924">
    <property type="term" value="F:GTPase activity"/>
    <property type="evidence" value="ECO:0007669"/>
    <property type="project" value="InterPro"/>
</dbReference>
<dbReference type="GO" id="GO:0003746">
    <property type="term" value="F:translation elongation factor activity"/>
    <property type="evidence" value="ECO:0007669"/>
    <property type="project" value="UniProtKB-UniRule"/>
</dbReference>
<dbReference type="CDD" id="cd01884">
    <property type="entry name" value="EF_Tu"/>
    <property type="match status" value="1"/>
</dbReference>
<dbReference type="CDD" id="cd03697">
    <property type="entry name" value="EFTU_II"/>
    <property type="match status" value="1"/>
</dbReference>
<dbReference type="CDD" id="cd03707">
    <property type="entry name" value="EFTU_III"/>
    <property type="match status" value="1"/>
</dbReference>
<dbReference type="FunFam" id="2.40.30.10:FF:000001">
    <property type="entry name" value="Elongation factor Tu"/>
    <property type="match status" value="1"/>
</dbReference>
<dbReference type="FunFam" id="3.40.50.300:FF:000003">
    <property type="entry name" value="Elongation factor Tu"/>
    <property type="match status" value="1"/>
</dbReference>
<dbReference type="Gene3D" id="3.40.50.300">
    <property type="entry name" value="P-loop containing nucleotide triphosphate hydrolases"/>
    <property type="match status" value="1"/>
</dbReference>
<dbReference type="Gene3D" id="2.40.30.10">
    <property type="entry name" value="Translation factors"/>
    <property type="match status" value="2"/>
</dbReference>
<dbReference type="HAMAP" id="MF_00118_B">
    <property type="entry name" value="EF_Tu_B"/>
    <property type="match status" value="1"/>
</dbReference>
<dbReference type="InterPro" id="IPR041709">
    <property type="entry name" value="EF-Tu_GTP-bd"/>
</dbReference>
<dbReference type="InterPro" id="IPR050055">
    <property type="entry name" value="EF-Tu_GTPase"/>
</dbReference>
<dbReference type="InterPro" id="IPR004161">
    <property type="entry name" value="EFTu-like_2"/>
</dbReference>
<dbReference type="InterPro" id="IPR033720">
    <property type="entry name" value="EFTU_2"/>
</dbReference>
<dbReference type="InterPro" id="IPR031157">
    <property type="entry name" value="G_TR_CS"/>
</dbReference>
<dbReference type="InterPro" id="IPR027417">
    <property type="entry name" value="P-loop_NTPase"/>
</dbReference>
<dbReference type="InterPro" id="IPR005225">
    <property type="entry name" value="Small_GTP-bd"/>
</dbReference>
<dbReference type="InterPro" id="IPR000795">
    <property type="entry name" value="T_Tr_GTP-bd_dom"/>
</dbReference>
<dbReference type="InterPro" id="IPR009000">
    <property type="entry name" value="Transl_B-barrel_sf"/>
</dbReference>
<dbReference type="InterPro" id="IPR009001">
    <property type="entry name" value="Transl_elong_EF1A/Init_IF2_C"/>
</dbReference>
<dbReference type="InterPro" id="IPR004541">
    <property type="entry name" value="Transl_elong_EFTu/EF1A_bac/org"/>
</dbReference>
<dbReference type="InterPro" id="IPR004160">
    <property type="entry name" value="Transl_elong_EFTu/EF1A_C"/>
</dbReference>
<dbReference type="NCBIfam" id="TIGR00485">
    <property type="entry name" value="EF-Tu"/>
    <property type="match status" value="1"/>
</dbReference>
<dbReference type="NCBIfam" id="NF000766">
    <property type="entry name" value="PRK00049.1"/>
    <property type="match status" value="1"/>
</dbReference>
<dbReference type="NCBIfam" id="NF009372">
    <property type="entry name" value="PRK12735.1"/>
    <property type="match status" value="1"/>
</dbReference>
<dbReference type="NCBIfam" id="NF009373">
    <property type="entry name" value="PRK12736.1"/>
    <property type="match status" value="1"/>
</dbReference>
<dbReference type="NCBIfam" id="TIGR00231">
    <property type="entry name" value="small_GTP"/>
    <property type="match status" value="1"/>
</dbReference>
<dbReference type="PANTHER" id="PTHR43721:SF22">
    <property type="entry name" value="ELONGATION FACTOR TU, MITOCHONDRIAL"/>
    <property type="match status" value="1"/>
</dbReference>
<dbReference type="PANTHER" id="PTHR43721">
    <property type="entry name" value="ELONGATION FACTOR TU-RELATED"/>
    <property type="match status" value="1"/>
</dbReference>
<dbReference type="Pfam" id="PF00009">
    <property type="entry name" value="GTP_EFTU"/>
    <property type="match status" value="1"/>
</dbReference>
<dbReference type="Pfam" id="PF03144">
    <property type="entry name" value="GTP_EFTU_D2"/>
    <property type="match status" value="1"/>
</dbReference>
<dbReference type="Pfam" id="PF03143">
    <property type="entry name" value="GTP_EFTU_D3"/>
    <property type="match status" value="1"/>
</dbReference>
<dbReference type="PRINTS" id="PR00315">
    <property type="entry name" value="ELONGATNFCT"/>
</dbReference>
<dbReference type="SUPFAM" id="SSF50465">
    <property type="entry name" value="EF-Tu/eEF-1alpha/eIF2-gamma C-terminal domain"/>
    <property type="match status" value="1"/>
</dbReference>
<dbReference type="SUPFAM" id="SSF52540">
    <property type="entry name" value="P-loop containing nucleoside triphosphate hydrolases"/>
    <property type="match status" value="1"/>
</dbReference>
<dbReference type="SUPFAM" id="SSF50447">
    <property type="entry name" value="Translation proteins"/>
    <property type="match status" value="1"/>
</dbReference>
<dbReference type="PROSITE" id="PS00301">
    <property type="entry name" value="G_TR_1"/>
    <property type="match status" value="1"/>
</dbReference>
<dbReference type="PROSITE" id="PS51722">
    <property type="entry name" value="G_TR_2"/>
    <property type="match status" value="1"/>
</dbReference>
<comment type="function">
    <text evidence="2">GTP hydrolase that promotes the GTP-dependent binding of aminoacyl-tRNA to the A-site of ribosomes during protein biosynthesis.</text>
</comment>
<comment type="catalytic activity">
    <reaction evidence="2">
        <text>GTP + H2O = GDP + phosphate + H(+)</text>
        <dbReference type="Rhea" id="RHEA:19669"/>
        <dbReference type="ChEBI" id="CHEBI:15377"/>
        <dbReference type="ChEBI" id="CHEBI:15378"/>
        <dbReference type="ChEBI" id="CHEBI:37565"/>
        <dbReference type="ChEBI" id="CHEBI:43474"/>
        <dbReference type="ChEBI" id="CHEBI:58189"/>
        <dbReference type="EC" id="3.6.5.3"/>
    </reaction>
    <physiologicalReaction direction="left-to-right" evidence="2">
        <dbReference type="Rhea" id="RHEA:19670"/>
    </physiologicalReaction>
</comment>
<comment type="subunit">
    <text evidence="2">Monomer.</text>
</comment>
<comment type="subcellular location">
    <subcellularLocation>
        <location evidence="2">Cytoplasm</location>
    </subcellularLocation>
</comment>
<comment type="similarity">
    <text evidence="2">Belongs to the TRAFAC class translation factor GTPase superfamily. Classic translation factor GTPase family. EF-Tu/EF-1A subfamily.</text>
</comment>
<keyword id="KW-0963">Cytoplasm</keyword>
<keyword id="KW-0251">Elongation factor</keyword>
<keyword id="KW-0342">GTP-binding</keyword>
<keyword id="KW-0378">Hydrolase</keyword>
<keyword id="KW-0460">Magnesium</keyword>
<keyword id="KW-0479">Metal-binding</keyword>
<keyword id="KW-0547">Nucleotide-binding</keyword>
<keyword id="KW-0648">Protein biosynthesis</keyword>
<keyword id="KW-1185">Reference proteome</keyword>
<evidence type="ECO:0000250" key="1"/>
<evidence type="ECO:0000255" key="2">
    <source>
        <dbReference type="HAMAP-Rule" id="MF_00118"/>
    </source>
</evidence>
<feature type="chain" id="PRO_0000337419" description="Elongation factor Tu">
    <location>
        <begin position="1"/>
        <end position="396"/>
    </location>
</feature>
<feature type="domain" description="tr-type G">
    <location>
        <begin position="11"/>
        <end position="205"/>
    </location>
</feature>
<feature type="region of interest" description="G1" evidence="1">
    <location>
        <begin position="20"/>
        <end position="27"/>
    </location>
</feature>
<feature type="region of interest" description="G2" evidence="1">
    <location>
        <begin position="61"/>
        <end position="65"/>
    </location>
</feature>
<feature type="region of interest" description="G3" evidence="1">
    <location>
        <begin position="82"/>
        <end position="85"/>
    </location>
</feature>
<feature type="region of interest" description="G4" evidence="1">
    <location>
        <begin position="137"/>
        <end position="140"/>
    </location>
</feature>
<feature type="region of interest" description="G5" evidence="1">
    <location>
        <begin position="175"/>
        <end position="177"/>
    </location>
</feature>
<feature type="binding site" evidence="2">
    <location>
        <begin position="20"/>
        <end position="27"/>
    </location>
    <ligand>
        <name>GTP</name>
        <dbReference type="ChEBI" id="CHEBI:37565"/>
    </ligand>
</feature>
<feature type="binding site" evidence="2">
    <location>
        <position position="27"/>
    </location>
    <ligand>
        <name>Mg(2+)</name>
        <dbReference type="ChEBI" id="CHEBI:18420"/>
    </ligand>
</feature>
<feature type="binding site" evidence="2">
    <location>
        <begin position="82"/>
        <end position="86"/>
    </location>
    <ligand>
        <name>GTP</name>
        <dbReference type="ChEBI" id="CHEBI:37565"/>
    </ligand>
</feature>
<feature type="binding site" evidence="2">
    <location>
        <begin position="137"/>
        <end position="140"/>
    </location>
    <ligand>
        <name>GTP</name>
        <dbReference type="ChEBI" id="CHEBI:37565"/>
    </ligand>
</feature>
<gene>
    <name evidence="2" type="primary">tuf</name>
    <name type="ordered locus">Lreu_0651</name>
</gene>